<dbReference type="EMBL" id="CP000496">
    <property type="protein sequence ID" value="ABN64814.2"/>
    <property type="molecule type" value="Genomic_DNA"/>
</dbReference>
<dbReference type="RefSeq" id="XP_001382843.2">
    <property type="nucleotide sequence ID" value="XM_001382806.1"/>
</dbReference>
<dbReference type="SMR" id="A3LN86"/>
<dbReference type="FunCoup" id="A3LN86">
    <property type="interactions" value="83"/>
</dbReference>
<dbReference type="STRING" id="322104.A3LN86"/>
<dbReference type="GeneID" id="4837591"/>
<dbReference type="KEGG" id="pic:PICST_55255"/>
<dbReference type="eggNOG" id="KOG0998">
    <property type="taxonomic scope" value="Eukaryota"/>
</dbReference>
<dbReference type="HOGENOM" id="CLU_001619_0_0_1"/>
<dbReference type="InParanoid" id="A3LN86"/>
<dbReference type="OMA" id="GMPGQWG"/>
<dbReference type="OrthoDB" id="2015333at2759"/>
<dbReference type="Proteomes" id="UP000002258">
    <property type="component" value="Chromosome 2"/>
</dbReference>
<dbReference type="GO" id="GO:0030479">
    <property type="term" value="C:actin cortical patch"/>
    <property type="evidence" value="ECO:0007669"/>
    <property type="project" value="UniProtKB-SubCell"/>
</dbReference>
<dbReference type="GO" id="GO:0010008">
    <property type="term" value="C:endosome membrane"/>
    <property type="evidence" value="ECO:0007669"/>
    <property type="project" value="UniProtKB-SubCell"/>
</dbReference>
<dbReference type="GO" id="GO:0005886">
    <property type="term" value="C:plasma membrane"/>
    <property type="evidence" value="ECO:0007669"/>
    <property type="project" value="UniProtKB-SubCell"/>
</dbReference>
<dbReference type="GO" id="GO:0003779">
    <property type="term" value="F:actin binding"/>
    <property type="evidence" value="ECO:0007669"/>
    <property type="project" value="UniProtKB-KW"/>
</dbReference>
<dbReference type="GO" id="GO:0005509">
    <property type="term" value="F:calcium ion binding"/>
    <property type="evidence" value="ECO:0007669"/>
    <property type="project" value="InterPro"/>
</dbReference>
<dbReference type="GO" id="GO:0006897">
    <property type="term" value="P:endocytosis"/>
    <property type="evidence" value="ECO:0007669"/>
    <property type="project" value="UniProtKB-KW"/>
</dbReference>
<dbReference type="GO" id="GO:0016197">
    <property type="term" value="P:endosomal transport"/>
    <property type="evidence" value="ECO:0007669"/>
    <property type="project" value="TreeGrafter"/>
</dbReference>
<dbReference type="CDD" id="cd00052">
    <property type="entry name" value="EH"/>
    <property type="match status" value="2"/>
</dbReference>
<dbReference type="CDD" id="cd21762">
    <property type="entry name" value="WH2"/>
    <property type="match status" value="1"/>
</dbReference>
<dbReference type="FunFam" id="1.10.238.10:FF:000349">
    <property type="entry name" value="Actin cytoskeleton-regulatory complex protein PAN1"/>
    <property type="match status" value="1"/>
</dbReference>
<dbReference type="Gene3D" id="1.10.238.10">
    <property type="entry name" value="EF-hand"/>
    <property type="match status" value="2"/>
</dbReference>
<dbReference type="InterPro" id="IPR013182">
    <property type="entry name" value="DUF1720"/>
</dbReference>
<dbReference type="InterPro" id="IPR011992">
    <property type="entry name" value="EF-hand-dom_pair"/>
</dbReference>
<dbReference type="InterPro" id="IPR002048">
    <property type="entry name" value="EF_hand_dom"/>
</dbReference>
<dbReference type="InterPro" id="IPR000261">
    <property type="entry name" value="EH_dom"/>
</dbReference>
<dbReference type="InterPro" id="IPR003124">
    <property type="entry name" value="WH2_dom"/>
</dbReference>
<dbReference type="PANTHER" id="PTHR11216:SF173">
    <property type="entry name" value="ACTIN CYTOSKELETON-REGULATORY COMPLEX PROTEIN PAN1"/>
    <property type="match status" value="1"/>
</dbReference>
<dbReference type="PANTHER" id="PTHR11216">
    <property type="entry name" value="EH DOMAIN"/>
    <property type="match status" value="1"/>
</dbReference>
<dbReference type="Pfam" id="PF08226">
    <property type="entry name" value="DUF1720"/>
    <property type="match status" value="2"/>
</dbReference>
<dbReference type="Pfam" id="PF12763">
    <property type="entry name" value="EH"/>
    <property type="match status" value="2"/>
</dbReference>
<dbReference type="PRINTS" id="PR01217">
    <property type="entry name" value="PRICHEXTENSN"/>
</dbReference>
<dbReference type="SMART" id="SM00027">
    <property type="entry name" value="EH"/>
    <property type="match status" value="2"/>
</dbReference>
<dbReference type="SUPFAM" id="SSF47473">
    <property type="entry name" value="EF-hand"/>
    <property type="match status" value="2"/>
</dbReference>
<dbReference type="PROSITE" id="PS50222">
    <property type="entry name" value="EF_HAND_2"/>
    <property type="match status" value="2"/>
</dbReference>
<dbReference type="PROSITE" id="PS50031">
    <property type="entry name" value="EH"/>
    <property type="match status" value="2"/>
</dbReference>
<dbReference type="PROSITE" id="PS51082">
    <property type="entry name" value="WH2"/>
    <property type="match status" value="1"/>
</dbReference>
<reference key="1">
    <citation type="journal article" date="2007" name="Nat. Biotechnol.">
        <title>Genome sequence of the lignocellulose-bioconverting and xylose-fermenting yeast Pichia stipitis.</title>
        <authorList>
            <person name="Jeffries T.W."/>
            <person name="Grigoriev I.V."/>
            <person name="Grimwood J."/>
            <person name="Laplaza J.M."/>
            <person name="Aerts A."/>
            <person name="Salamov A."/>
            <person name="Schmutz J."/>
            <person name="Lindquist E."/>
            <person name="Dehal P."/>
            <person name="Shapiro H."/>
            <person name="Jin Y.-S."/>
            <person name="Passoth V."/>
            <person name="Richardson P.M."/>
        </authorList>
    </citation>
    <scope>NUCLEOTIDE SEQUENCE [LARGE SCALE GENOMIC DNA]</scope>
    <source>
        <strain>ATCC 58785 / CBS 6054 / NBRC 10063 / NRRL Y-11545</strain>
    </source>
</reference>
<comment type="function">
    <text evidence="1">Component of the PAN1 actin cytoskeleton-regulatory complex required for the internalization of endosomes during actin-coupled endocytosis. The complex links the site of endocytosis to the cell membrane-associated actin cytoskeleton. Mediates uptake of external molecules and vacuolar degradation of plasma membrane proteins. Plays a role in the proper organization of the cell membrane-associated actin cytoskeleton and promotes its destabilization (By similarity).</text>
</comment>
<comment type="subunit">
    <text evidence="1">Component of the PAN1 actin cytoskeleton-regulatory complex.</text>
</comment>
<comment type="subcellular location">
    <subcellularLocation>
        <location evidence="1">Cell membrane</location>
        <topology evidence="1">Peripheral membrane protein</topology>
        <orientation evidence="1">Cytoplasmic side</orientation>
    </subcellularLocation>
    <subcellularLocation>
        <location evidence="1">Endosome membrane</location>
        <topology evidence="1">Peripheral membrane protein</topology>
        <orientation evidence="1">Cytoplasmic side</orientation>
    </subcellularLocation>
    <subcellularLocation>
        <location evidence="1">Cytoplasm</location>
        <location evidence="1">Cytoskeleton</location>
        <location evidence="1">Actin patch</location>
    </subcellularLocation>
    <text evidence="1">Cytoplasmic and cortical actin patches.</text>
</comment>
<comment type="similarity">
    <text evidence="7">Belongs to the PAN1 family.</text>
</comment>
<evidence type="ECO:0000250" key="1"/>
<evidence type="ECO:0000255" key="2"/>
<evidence type="ECO:0000255" key="3">
    <source>
        <dbReference type="PROSITE-ProRule" id="PRU00077"/>
    </source>
</evidence>
<evidence type="ECO:0000255" key="4">
    <source>
        <dbReference type="PROSITE-ProRule" id="PRU00406"/>
    </source>
</evidence>
<evidence type="ECO:0000255" key="5">
    <source>
        <dbReference type="PROSITE-ProRule" id="PRU00448"/>
    </source>
</evidence>
<evidence type="ECO:0000256" key="6">
    <source>
        <dbReference type="SAM" id="MobiDB-lite"/>
    </source>
</evidence>
<evidence type="ECO:0000305" key="7"/>
<accession>A3LN86</accession>
<proteinExistence type="inferred from homology"/>
<name>PAN1_PICST</name>
<keyword id="KW-0009">Actin-binding</keyword>
<keyword id="KW-1003">Cell membrane</keyword>
<keyword id="KW-0175">Coiled coil</keyword>
<keyword id="KW-0963">Cytoplasm</keyword>
<keyword id="KW-0206">Cytoskeleton</keyword>
<keyword id="KW-0254">Endocytosis</keyword>
<keyword id="KW-0967">Endosome</keyword>
<keyword id="KW-0472">Membrane</keyword>
<keyword id="KW-1185">Reference proteome</keyword>
<keyword id="KW-0677">Repeat</keyword>
<gene>
    <name type="primary">PAN1</name>
    <name type="ORF">PICST_55255</name>
</gene>
<organism>
    <name type="scientific">Scheffersomyces stipitis (strain ATCC 58785 / CBS 6054 / NBRC 10063 / NRRL Y-11545)</name>
    <name type="common">Yeast</name>
    <name type="synonym">Pichia stipitis</name>
    <dbReference type="NCBI Taxonomy" id="322104"/>
    <lineage>
        <taxon>Eukaryota</taxon>
        <taxon>Fungi</taxon>
        <taxon>Dikarya</taxon>
        <taxon>Ascomycota</taxon>
        <taxon>Saccharomycotina</taxon>
        <taxon>Pichiomycetes</taxon>
        <taxon>Debaryomycetaceae</taxon>
        <taxon>Scheffersomyces</taxon>
    </lineage>
</organism>
<feature type="chain" id="PRO_0000349483" description="Actin cytoskeleton-regulatory complex protein PAN1">
    <location>
        <begin position="1"/>
        <end position="1373"/>
    </location>
</feature>
<feature type="domain" description="EH 1" evidence="3">
    <location>
        <begin position="116"/>
        <end position="205"/>
    </location>
</feature>
<feature type="domain" description="EF-hand 1" evidence="5">
    <location>
        <begin position="149"/>
        <end position="184"/>
    </location>
</feature>
<feature type="domain" description="EH 2" evidence="3">
    <location>
        <begin position="465"/>
        <end position="554"/>
    </location>
</feature>
<feature type="domain" description="EF-hand 2" evidence="5">
    <location>
        <begin position="498"/>
        <end position="533"/>
    </location>
</feature>
<feature type="domain" description="WH2" evidence="4">
    <location>
        <begin position="1338"/>
        <end position="1355"/>
    </location>
</feature>
<feature type="region of interest" description="Disordered" evidence="6">
    <location>
        <begin position="271"/>
        <end position="362"/>
    </location>
</feature>
<feature type="region of interest" description="Disordered" evidence="6">
    <location>
        <begin position="385"/>
        <end position="409"/>
    </location>
</feature>
<feature type="region of interest" description="Disordered" evidence="6">
    <location>
        <begin position="562"/>
        <end position="622"/>
    </location>
</feature>
<feature type="region of interest" description="Disordered" evidence="6">
    <location>
        <begin position="739"/>
        <end position="758"/>
    </location>
</feature>
<feature type="region of interest" description="Disordered" evidence="6">
    <location>
        <begin position="876"/>
        <end position="914"/>
    </location>
</feature>
<feature type="region of interest" description="Disordered" evidence="6">
    <location>
        <begin position="931"/>
        <end position="1089"/>
    </location>
</feature>
<feature type="region of interest" description="Disordered" evidence="6">
    <location>
        <begin position="1103"/>
        <end position="1335"/>
    </location>
</feature>
<feature type="region of interest" description="Disordered" evidence="6">
    <location>
        <begin position="1349"/>
        <end position="1373"/>
    </location>
</feature>
<feature type="coiled-coil region" evidence="2">
    <location>
        <begin position="1007"/>
        <end position="1066"/>
    </location>
</feature>
<feature type="compositionally biased region" description="Low complexity" evidence="6">
    <location>
        <begin position="290"/>
        <end position="309"/>
    </location>
</feature>
<feature type="compositionally biased region" description="Low complexity" evidence="6">
    <location>
        <begin position="341"/>
        <end position="362"/>
    </location>
</feature>
<feature type="compositionally biased region" description="Polar residues" evidence="6">
    <location>
        <begin position="389"/>
        <end position="408"/>
    </location>
</feature>
<feature type="compositionally biased region" description="Polar residues" evidence="6">
    <location>
        <begin position="571"/>
        <end position="580"/>
    </location>
</feature>
<feature type="compositionally biased region" description="Basic and acidic residues" evidence="6">
    <location>
        <begin position="581"/>
        <end position="590"/>
    </location>
</feature>
<feature type="compositionally biased region" description="Polar residues" evidence="6">
    <location>
        <begin position="739"/>
        <end position="752"/>
    </location>
</feature>
<feature type="compositionally biased region" description="Low complexity" evidence="6">
    <location>
        <begin position="878"/>
        <end position="909"/>
    </location>
</feature>
<feature type="compositionally biased region" description="Low complexity" evidence="6">
    <location>
        <begin position="965"/>
        <end position="977"/>
    </location>
</feature>
<feature type="compositionally biased region" description="Basic and acidic residues" evidence="6">
    <location>
        <begin position="1019"/>
        <end position="1030"/>
    </location>
</feature>
<feature type="compositionally biased region" description="Basic and acidic residues" evidence="6">
    <location>
        <begin position="1038"/>
        <end position="1056"/>
    </location>
</feature>
<feature type="compositionally biased region" description="Acidic residues" evidence="6">
    <location>
        <begin position="1057"/>
        <end position="1067"/>
    </location>
</feature>
<feature type="compositionally biased region" description="Polar residues" evidence="6">
    <location>
        <begin position="1070"/>
        <end position="1079"/>
    </location>
</feature>
<feature type="compositionally biased region" description="Polar residues" evidence="6">
    <location>
        <begin position="1118"/>
        <end position="1134"/>
    </location>
</feature>
<feature type="compositionally biased region" description="Basic and acidic residues" evidence="6">
    <location>
        <begin position="1139"/>
        <end position="1149"/>
    </location>
</feature>
<feature type="compositionally biased region" description="Polar residues" evidence="6">
    <location>
        <begin position="1154"/>
        <end position="1166"/>
    </location>
</feature>
<feature type="compositionally biased region" description="Acidic residues" evidence="6">
    <location>
        <begin position="1167"/>
        <end position="1177"/>
    </location>
</feature>
<feature type="compositionally biased region" description="Pro residues" evidence="6">
    <location>
        <begin position="1250"/>
        <end position="1326"/>
    </location>
</feature>
<feature type="compositionally biased region" description="Polar residues" evidence="6">
    <location>
        <begin position="1357"/>
        <end position="1373"/>
    </location>
</feature>
<protein>
    <recommendedName>
        <fullName>Actin cytoskeleton-regulatory complex protein PAN1</fullName>
    </recommendedName>
</protein>
<sequence length="1373" mass="147329">MYNPYQQQQAGFAPQQTGFAYANQPSQQPQQSQSQLANQATGFYQPQLQQQTLFASSQFQPQTSFGTVASIQPQQTGYIQTQPTGFASQGIAAPTVVENSSLKIPSIRLSFITAEDQKKFEHLFRTAVPKGEQAINGDSASTILLRSGLTPVTLAEIWSLSDTNKSGSLLFPEFALSLHLCSMAKRGEPLPGYLPEKWANEVKSFVDAISFSVPEDPDKILANTPFASFSGTNTQDDWLSNLNNQTNSAAATSNFGAPGFTSFQPQATGYGGGLPLASQRTGPGLASIGTTSFSAPTAPTAPTAAPLASQRTGGGTLIPLQPQQTAGLIPAQKTGPLNGFPQQLQQQSTGYQPQLQQLQQQSTGYQPQLQQLQQQSTGYQSQLLAQRTGPLQSQSTGFQPAPLQSQPTGRPGEWGFVHTPTGGIPGLNAMQQHFLPNADLPTNNLQNQMGGDLKSNVTWAITKQEKSIYDGIFQAWDTTRRGYIDGDVALNVFSKSGLSRPDLESIWTLADTSDRGKLNKDEFSVAMHLVYRRLNGLDIPLRLPPELIPPSNKYLQDSMDTMKNSLRGGVNNKSYSGGKQTKSDGTRFKNDDDDFGYVSNARHRRRSTATDNGPKSIKSSSDSDLSVEDLKKLIREKRILIDALDAEDQDAVLNKKKESQHNIDIIEKLKSQIKDVQASLNSKGLDAPIEEKKQLLGVLNSLTRDKVPNLISNIYKVHNDIAKAKVELLKAKLLKQNPSWNPDSNESEIQGTGPNGEVTELDRRKFQSKQLLKQRMAALTGRTSNSGSNADLDLQLKQESEKAKSESINQSNIVKDIESSIKELEDGCATHLQTSATEESGSEKWERGQGISAEVAAFVRELNSFAESQRRNIAAQNSSSLESSTVSSTAEVSQPASSVSSQPVSASSSYRTPEERAAYIKAQAEKKMNERLAKLGISRSRNATIAEPNPPTKVDAQPATPPVAPAVVESAAVSPPVKKQPPPVSPRSVRVEQQKPAPPVDSSSDDDDEEYAAILKQKQQLEAKEKERKLAKQKQKQARLDKIKKEMEEIKRRQAEAEAEEDSDEEPSSVPTYTVSNSAPKAVAKTAEDPVVEPVIAKSVEQEAVPDQVAAPKAHESNPFSKVQATPTGNSTNPFFKPTTKESTIDPKKAAAQRASQRGLSKNDGWSDSDDNESEDDQPNRAGAAQLASLLFGGMAPKSKESTPQQTPQQEKTESEALSKSVSTLKDPSGSDDEFSTPPPDAPSQQTVAPPIPTEVPPIPTGAPPIPTGAPPIPTEAPPIPVGGPSSFAPPPPPPPPPPPGPPPIPNAPFGAPPPPPPPPGPPPPVSNGVTAPPVTADIGALLGQIQGGKSLKKVDASQQKISSNDLAGTVLS</sequence>